<evidence type="ECO:0000250" key="1">
    <source>
        <dbReference type="UniProtKB" id="Q24185"/>
    </source>
</evidence>
<evidence type="ECO:0000255" key="2"/>
<evidence type="ECO:0000255" key="3">
    <source>
        <dbReference type="PROSITE-ProRule" id="PRU00044"/>
    </source>
</evidence>
<evidence type="ECO:0000305" key="4"/>
<dbReference type="EMBL" id="CM000158">
    <property type="protein sequence ID" value="EDW90360.1"/>
    <property type="molecule type" value="Genomic_DNA"/>
</dbReference>
<dbReference type="SMR" id="B4PAF2"/>
<dbReference type="EnsemblMetazoa" id="FBtr0259199">
    <property type="protein sequence ID" value="FBpp0257691"/>
    <property type="gene ID" value="FBgn0230407"/>
</dbReference>
<dbReference type="EnsemblMetazoa" id="XM_002090612.3">
    <property type="protein sequence ID" value="XP_002090648.1"/>
    <property type="gene ID" value="LOC6529655"/>
</dbReference>
<dbReference type="GeneID" id="6529655"/>
<dbReference type="KEGG" id="dya:Dyak_GE12681"/>
<dbReference type="CTD" id="35169"/>
<dbReference type="eggNOG" id="ENOG502QQM8">
    <property type="taxonomic scope" value="Eukaryota"/>
</dbReference>
<dbReference type="HOGENOM" id="CLU_011214_1_0_1"/>
<dbReference type="OMA" id="DAKYRKC"/>
<dbReference type="OrthoDB" id="49395at2759"/>
<dbReference type="PhylomeDB" id="B4PAF2"/>
<dbReference type="Proteomes" id="UP000002282">
    <property type="component" value="Chromosome 2R"/>
</dbReference>
<dbReference type="GO" id="GO:0005813">
    <property type="term" value="C:centrosome"/>
    <property type="evidence" value="ECO:0007669"/>
    <property type="project" value="TreeGrafter"/>
</dbReference>
<dbReference type="GO" id="GO:0005768">
    <property type="term" value="C:endosome"/>
    <property type="evidence" value="ECO:0000250"/>
    <property type="project" value="UniProtKB"/>
</dbReference>
<dbReference type="GO" id="GO:0005874">
    <property type="term" value="C:microtubule"/>
    <property type="evidence" value="ECO:0007669"/>
    <property type="project" value="UniProtKB-KW"/>
</dbReference>
<dbReference type="GO" id="GO:0045202">
    <property type="term" value="C:synapse"/>
    <property type="evidence" value="ECO:0000250"/>
    <property type="project" value="UniProtKB"/>
</dbReference>
<dbReference type="GO" id="GO:0051959">
    <property type="term" value="F:dynein light intermediate chain binding"/>
    <property type="evidence" value="ECO:0007669"/>
    <property type="project" value="TreeGrafter"/>
</dbReference>
<dbReference type="GO" id="GO:0008017">
    <property type="term" value="F:microtubule binding"/>
    <property type="evidence" value="ECO:0000250"/>
    <property type="project" value="UniProtKB"/>
</dbReference>
<dbReference type="GO" id="GO:0031267">
    <property type="term" value="F:small GTPase binding"/>
    <property type="evidence" value="ECO:0007669"/>
    <property type="project" value="EnsemblMetazoa"/>
</dbReference>
<dbReference type="GO" id="GO:0031122">
    <property type="term" value="P:cytoplasmic microtubule organization"/>
    <property type="evidence" value="ECO:0007669"/>
    <property type="project" value="InterPro"/>
</dbReference>
<dbReference type="GO" id="GO:0030705">
    <property type="term" value="P:cytoskeleton-dependent intracellular transport"/>
    <property type="evidence" value="ECO:0000250"/>
    <property type="project" value="UniProtKB"/>
</dbReference>
<dbReference type="GO" id="GO:0008340">
    <property type="term" value="P:determination of adult lifespan"/>
    <property type="evidence" value="ECO:0000250"/>
    <property type="project" value="UniProtKB"/>
</dbReference>
<dbReference type="GO" id="GO:0006897">
    <property type="term" value="P:endocytosis"/>
    <property type="evidence" value="ECO:0000250"/>
    <property type="project" value="UniProtKB"/>
</dbReference>
<dbReference type="CDD" id="cd22222">
    <property type="entry name" value="HkD_Hook"/>
    <property type="match status" value="1"/>
</dbReference>
<dbReference type="FunFam" id="1.10.418.10:FF:000024">
    <property type="entry name" value="Hook homolog 3 (Drosophila)"/>
    <property type="match status" value="1"/>
</dbReference>
<dbReference type="Gene3D" id="1.10.418.10">
    <property type="entry name" value="Calponin-like domain"/>
    <property type="match status" value="1"/>
</dbReference>
<dbReference type="InterPro" id="IPR001715">
    <property type="entry name" value="CH_dom"/>
</dbReference>
<dbReference type="InterPro" id="IPR036872">
    <property type="entry name" value="CH_dom_sf"/>
</dbReference>
<dbReference type="InterPro" id="IPR008636">
    <property type="entry name" value="Hook_C"/>
</dbReference>
<dbReference type="InterPro" id="IPR043936">
    <property type="entry name" value="HOOK_N"/>
</dbReference>
<dbReference type="PANTHER" id="PTHR18947">
    <property type="entry name" value="HOOK PROTEINS"/>
    <property type="match status" value="1"/>
</dbReference>
<dbReference type="PANTHER" id="PTHR18947:SF39">
    <property type="entry name" value="PROTEIN HOOK"/>
    <property type="match status" value="1"/>
</dbReference>
<dbReference type="Pfam" id="PF05622">
    <property type="entry name" value="HOOK"/>
    <property type="match status" value="1"/>
</dbReference>
<dbReference type="Pfam" id="PF19047">
    <property type="entry name" value="HOOK_N"/>
    <property type="match status" value="1"/>
</dbReference>
<dbReference type="SUPFAM" id="SSF116907">
    <property type="entry name" value="Hook domain"/>
    <property type="match status" value="1"/>
</dbReference>
<dbReference type="PROSITE" id="PS50021">
    <property type="entry name" value="CH"/>
    <property type="match status" value="1"/>
</dbReference>
<reference key="1">
    <citation type="journal article" date="2007" name="Nature">
        <title>Evolution of genes and genomes on the Drosophila phylogeny.</title>
        <authorList>
            <consortium name="Drosophila 12 genomes consortium"/>
        </authorList>
    </citation>
    <scope>NUCLEOTIDE SEQUENCE [LARGE SCALE GENOMIC DNA]</scope>
    <source>
        <strain>Tai18E2 / Tucson 14021-0261.01</strain>
    </source>
</reference>
<accession>B4PAF2</accession>
<keyword id="KW-0175">Coiled coil</keyword>
<keyword id="KW-0963">Cytoplasm</keyword>
<keyword id="KW-0206">Cytoskeleton</keyword>
<keyword id="KW-0217">Developmental protein</keyword>
<keyword id="KW-0254">Endocytosis</keyword>
<keyword id="KW-0967">Endosome</keyword>
<keyword id="KW-0493">Microtubule</keyword>
<keyword id="KW-0770">Synapse</keyword>
<organism>
    <name type="scientific">Drosophila yakuba</name>
    <name type="common">Fruit fly</name>
    <dbReference type="NCBI Taxonomy" id="7245"/>
    <lineage>
        <taxon>Eukaryota</taxon>
        <taxon>Metazoa</taxon>
        <taxon>Ecdysozoa</taxon>
        <taxon>Arthropoda</taxon>
        <taxon>Hexapoda</taxon>
        <taxon>Insecta</taxon>
        <taxon>Pterygota</taxon>
        <taxon>Neoptera</taxon>
        <taxon>Endopterygota</taxon>
        <taxon>Diptera</taxon>
        <taxon>Brachycera</taxon>
        <taxon>Muscomorpha</taxon>
        <taxon>Ephydroidea</taxon>
        <taxon>Drosophilidae</taxon>
        <taxon>Drosophila</taxon>
        <taxon>Sophophora</taxon>
    </lineage>
</organism>
<gene>
    <name evidence="1" type="primary">hook</name>
    <name evidence="1" type="synonym">hk</name>
    <name type="ORF">GE12681</name>
</gene>
<proteinExistence type="inferred from homology"/>
<name>HOOK_DROYA</name>
<protein>
    <recommendedName>
        <fullName>Protein hook</fullName>
    </recommendedName>
</protein>
<feature type="chain" id="PRO_0000379071" description="Protein hook">
    <location>
        <begin position="1"/>
        <end position="679"/>
    </location>
</feature>
<feature type="domain" description="Calponin-homology (CH)" evidence="3">
    <location>
        <begin position="6"/>
        <end position="123"/>
    </location>
</feature>
<feature type="coiled-coil region" evidence="2">
    <location>
        <begin position="135"/>
        <end position="437"/>
    </location>
</feature>
<feature type="coiled-coil region" evidence="2">
    <location>
        <begin position="480"/>
        <end position="574"/>
    </location>
</feature>
<sequence length="679" mass="76552">MSAPKNEMYYSLLEWFKTLNLNAPHADAESLADGVALAQALNQFAPESFTDAWLSKIKASAVGSNWRLRMSNLKKVTQSVYDYYSDVLNYSLSDFSKPDLQSIAEKCDLGELERLLQLVLGCAVNCAEKQSYITEIMCLEEELQANIMRALQELEATRQASSAEGGVVSSLSRSPRTGILDSKAVQEDRDALAQKCFETEKKMLLLIDEKTNLQQELHKLQQEFARLEQHSTVIGDDGVSLGPVQSGSVRYNELRRQLDLLKEELLQSEGAREDLKLKAQQQDTDLLHMQMRIEELMKSSAEVTTLKDEVDVLRESNDKLKICEAQLDTYKKKLEDYNDLKKQVKILEERSADYVQQNAQFEEDAKRYANTKGQVELFKKEIQDLHAKLDAESSKNVKLEFDNKNLDGKNLALQRAKDSLLKERDNLREAVDELKCGQLSSNTALTGTTVSRELQPSATVEKLQRLEAENKALREGQGGQTALAQLLDDANKRCENLREQLKTANERILSLSHASQSDDPILKESEFGKQIKQLMELNEQKTLQLEEAVTQSTSLQCKVTQLETNLSAREQEILVYDAKYRKCVEKAKEVIKSIDPRIASALDASVLEKSADLVEDEPKPKMSVMEEQLMTSAFYRLGVNAQRDAIDSKLAILMGSGQTFLARQRQSAPRKSLSAMKSK</sequence>
<comment type="function">
    <text evidence="1">Involved in endocytic trafficking by stabilizing organelles of the endocytic pathway. Probably acts as a cytoskeletal linker protein required to tether endosome vesicles to the cytoskeleton. Involved in modulation of endocytosis at stages required for down-regulation of membrane proteins that control synapse size. Not involved in synaptic vesicle recycling. Required in R7 cells for boss endocytosis into multivesicular bodies (MVBs). Has a role in regulating adult longevity.</text>
</comment>
<comment type="subunit">
    <text evidence="1">Homodimer. Interacts with microtubules via its N-terminus.</text>
</comment>
<comment type="subcellular location">
    <subcellularLocation>
        <location evidence="1">Cytoplasm</location>
        <location evidence="1">Cytoskeleton</location>
    </subcellularLocation>
    <subcellularLocation>
        <location evidence="1">Endosome</location>
    </subcellularLocation>
    <subcellularLocation>
        <location evidence="1">Synapse</location>
    </subcellularLocation>
    <text evidence="1">Enriched at neuromuscular synapses, in both presynaptic and postsynaptic regions.</text>
</comment>
<comment type="domain">
    <text evidence="1">The coiled coil domain mediates homodimerization.</text>
</comment>
<comment type="similarity">
    <text evidence="4">Belongs to the hook family.</text>
</comment>